<organism>
    <name type="scientific">Caldanaerobacter subterraneus subsp. tengcongensis (strain DSM 15242 / JCM 11007 / NBRC 100824 / MB4)</name>
    <name type="common">Thermoanaerobacter tengcongensis</name>
    <dbReference type="NCBI Taxonomy" id="273068"/>
    <lineage>
        <taxon>Bacteria</taxon>
        <taxon>Bacillati</taxon>
        <taxon>Bacillota</taxon>
        <taxon>Clostridia</taxon>
        <taxon>Thermoanaerobacterales</taxon>
        <taxon>Thermoanaerobacteraceae</taxon>
        <taxon>Caldanaerobacter</taxon>
    </lineage>
</organism>
<dbReference type="EC" id="4.1.2.4" evidence="1"/>
<dbReference type="EMBL" id="AE008691">
    <property type="protein sequence ID" value="AAM24230.1"/>
    <property type="molecule type" value="Genomic_DNA"/>
</dbReference>
<dbReference type="SMR" id="Q8RB49"/>
<dbReference type="STRING" id="273068.TTE0975"/>
<dbReference type="KEGG" id="tte:TTE0975"/>
<dbReference type="eggNOG" id="COG0274">
    <property type="taxonomic scope" value="Bacteria"/>
</dbReference>
<dbReference type="HOGENOM" id="CLU_053595_0_2_9"/>
<dbReference type="UniPathway" id="UPA00002">
    <property type="reaction ID" value="UER00468"/>
</dbReference>
<dbReference type="Proteomes" id="UP000000555">
    <property type="component" value="Chromosome"/>
</dbReference>
<dbReference type="GO" id="GO:0005737">
    <property type="term" value="C:cytoplasm"/>
    <property type="evidence" value="ECO:0007669"/>
    <property type="project" value="UniProtKB-SubCell"/>
</dbReference>
<dbReference type="GO" id="GO:0004139">
    <property type="term" value="F:deoxyribose-phosphate aldolase activity"/>
    <property type="evidence" value="ECO:0007669"/>
    <property type="project" value="UniProtKB-UniRule"/>
</dbReference>
<dbReference type="GO" id="GO:0006018">
    <property type="term" value="P:2-deoxyribose 1-phosphate catabolic process"/>
    <property type="evidence" value="ECO:0007669"/>
    <property type="project" value="UniProtKB-UniRule"/>
</dbReference>
<dbReference type="GO" id="GO:0016052">
    <property type="term" value="P:carbohydrate catabolic process"/>
    <property type="evidence" value="ECO:0007669"/>
    <property type="project" value="TreeGrafter"/>
</dbReference>
<dbReference type="GO" id="GO:0009264">
    <property type="term" value="P:deoxyribonucleotide catabolic process"/>
    <property type="evidence" value="ECO:0007669"/>
    <property type="project" value="InterPro"/>
</dbReference>
<dbReference type="CDD" id="cd00959">
    <property type="entry name" value="DeoC"/>
    <property type="match status" value="1"/>
</dbReference>
<dbReference type="FunFam" id="3.20.20.70:FF:000044">
    <property type="entry name" value="Deoxyribose-phosphate aldolase"/>
    <property type="match status" value="1"/>
</dbReference>
<dbReference type="Gene3D" id="3.20.20.70">
    <property type="entry name" value="Aldolase class I"/>
    <property type="match status" value="1"/>
</dbReference>
<dbReference type="HAMAP" id="MF_00114">
    <property type="entry name" value="DeoC_type1"/>
    <property type="match status" value="1"/>
</dbReference>
<dbReference type="InterPro" id="IPR013785">
    <property type="entry name" value="Aldolase_TIM"/>
</dbReference>
<dbReference type="InterPro" id="IPR011343">
    <property type="entry name" value="DeoC"/>
</dbReference>
<dbReference type="InterPro" id="IPR002915">
    <property type="entry name" value="DeoC/FbaB/LacD_aldolase"/>
</dbReference>
<dbReference type="InterPro" id="IPR028581">
    <property type="entry name" value="DeoC_typeI"/>
</dbReference>
<dbReference type="NCBIfam" id="TIGR00126">
    <property type="entry name" value="deoC"/>
    <property type="match status" value="1"/>
</dbReference>
<dbReference type="PANTHER" id="PTHR10889">
    <property type="entry name" value="DEOXYRIBOSE-PHOSPHATE ALDOLASE"/>
    <property type="match status" value="1"/>
</dbReference>
<dbReference type="PANTHER" id="PTHR10889:SF1">
    <property type="entry name" value="DEOXYRIBOSE-PHOSPHATE ALDOLASE"/>
    <property type="match status" value="1"/>
</dbReference>
<dbReference type="Pfam" id="PF01791">
    <property type="entry name" value="DeoC"/>
    <property type="match status" value="1"/>
</dbReference>
<dbReference type="PIRSF" id="PIRSF001357">
    <property type="entry name" value="DeoC"/>
    <property type="match status" value="1"/>
</dbReference>
<dbReference type="SMART" id="SM01133">
    <property type="entry name" value="DeoC"/>
    <property type="match status" value="1"/>
</dbReference>
<dbReference type="SUPFAM" id="SSF51569">
    <property type="entry name" value="Aldolase"/>
    <property type="match status" value="1"/>
</dbReference>
<name>DEOC_CALS4</name>
<reference key="1">
    <citation type="journal article" date="2002" name="Genome Res.">
        <title>A complete sequence of the T. tengcongensis genome.</title>
        <authorList>
            <person name="Bao Q."/>
            <person name="Tian Y."/>
            <person name="Li W."/>
            <person name="Xu Z."/>
            <person name="Xuan Z."/>
            <person name="Hu S."/>
            <person name="Dong W."/>
            <person name="Yang J."/>
            <person name="Chen Y."/>
            <person name="Xue Y."/>
            <person name="Xu Y."/>
            <person name="Lai X."/>
            <person name="Huang L."/>
            <person name="Dong X."/>
            <person name="Ma Y."/>
            <person name="Ling L."/>
            <person name="Tan H."/>
            <person name="Chen R."/>
            <person name="Wang J."/>
            <person name="Yu J."/>
            <person name="Yang H."/>
        </authorList>
    </citation>
    <scope>NUCLEOTIDE SEQUENCE [LARGE SCALE GENOMIC DNA]</scope>
    <source>
        <strain>DSM 15242 / JCM 11007 / NBRC 100824 / MB4</strain>
    </source>
</reference>
<evidence type="ECO:0000255" key="1">
    <source>
        <dbReference type="HAMAP-Rule" id="MF_00114"/>
    </source>
</evidence>
<keyword id="KW-0963">Cytoplasm</keyword>
<keyword id="KW-0456">Lyase</keyword>
<keyword id="KW-1185">Reference proteome</keyword>
<keyword id="KW-0704">Schiff base</keyword>
<gene>
    <name evidence="1" type="primary">deoC</name>
    <name type="ordered locus">TTE0975</name>
</gene>
<sequence>MLKKEESLMNIAKMIDHTLLKPNATKEEIKKVCEEAREYGFASVCINPCFVDLAYEMLKDTDVKVCTVVGFPLGANTIETKVVEAVEAVKKGATEIDMVLNISMLKSGEYDYVKKEIGEVVKAVKSHGDIVVKVILETCYLSDEEKIKACEISKEAGADFVKTSTGFGPGGATVEDVKLMRKVVGENFGVKASGGIRSYEDAKAMIEAGANRIGASAGVKIVEEWKKQGLG</sequence>
<accession>Q8RB49</accession>
<comment type="function">
    <text evidence="1">Catalyzes a reversible aldol reaction between acetaldehyde and D-glyceraldehyde 3-phosphate to generate 2-deoxy-D-ribose 5-phosphate.</text>
</comment>
<comment type="catalytic activity">
    <reaction evidence="1">
        <text>2-deoxy-D-ribose 5-phosphate = D-glyceraldehyde 3-phosphate + acetaldehyde</text>
        <dbReference type="Rhea" id="RHEA:12821"/>
        <dbReference type="ChEBI" id="CHEBI:15343"/>
        <dbReference type="ChEBI" id="CHEBI:59776"/>
        <dbReference type="ChEBI" id="CHEBI:62877"/>
        <dbReference type="EC" id="4.1.2.4"/>
    </reaction>
</comment>
<comment type="pathway">
    <text evidence="1">Carbohydrate degradation; 2-deoxy-D-ribose 1-phosphate degradation; D-glyceraldehyde 3-phosphate and acetaldehyde from 2-deoxy-alpha-D-ribose 1-phosphate: step 2/2.</text>
</comment>
<comment type="subcellular location">
    <subcellularLocation>
        <location evidence="1">Cytoplasm</location>
    </subcellularLocation>
</comment>
<comment type="similarity">
    <text evidence="1">Belongs to the DeoC/FbaB aldolase family. DeoC type 1 subfamily.</text>
</comment>
<feature type="chain" id="PRO_0000057281" description="Deoxyribose-phosphate aldolase">
    <location>
        <begin position="1"/>
        <end position="231"/>
    </location>
</feature>
<feature type="active site" description="Proton donor/acceptor" evidence="1">
    <location>
        <position position="97"/>
    </location>
</feature>
<feature type="active site" description="Schiff-base intermediate with acetaldehyde" evidence="1">
    <location>
        <position position="162"/>
    </location>
</feature>
<feature type="active site" description="Proton donor/acceptor" evidence="1">
    <location>
        <position position="191"/>
    </location>
</feature>
<proteinExistence type="inferred from homology"/>
<protein>
    <recommendedName>
        <fullName evidence="1">Deoxyribose-phosphate aldolase</fullName>
        <shortName evidence="1">DERA</shortName>
        <ecNumber evidence="1">4.1.2.4</ecNumber>
    </recommendedName>
    <alternativeName>
        <fullName evidence="1">2-deoxy-D-ribose 5-phosphate aldolase</fullName>
    </alternativeName>
    <alternativeName>
        <fullName evidence="1">Phosphodeoxyriboaldolase</fullName>
        <shortName evidence="1">Deoxyriboaldolase</shortName>
    </alternativeName>
</protein>